<accession>P0C6F4</accession>
<accession>Q3T8J2</accession>
<organismHost>
    <name type="scientific">Bos taurus</name>
    <name type="common">Bovine</name>
    <dbReference type="NCBI Taxonomy" id="9913"/>
</organismHost>
<protein>
    <recommendedName>
        <fullName>Replicase polyprotein 1a</fullName>
        <shortName>pp1a</shortName>
    </recommendedName>
    <alternativeName>
        <fullName>ORF1a polyprotein</fullName>
    </alternativeName>
    <component>
        <recommendedName>
            <fullName>Papain-like proteinase</fullName>
            <shortName evidence="2">PL-PRO</shortName>
            <ecNumber>3.4.22.-</ecNumber>
        </recommendedName>
        <alternativeName>
            <fullName>Non-structural protein 1</fullName>
            <shortName>nsp1</shortName>
        </alternativeName>
    </component>
    <component>
        <recommendedName>
            <fullName>Non-structural protein 2</fullName>
            <shortName>nsp2</shortName>
        </recommendedName>
    </component>
    <component>
        <recommendedName>
            <fullName>3C-like serine proteinase</fullName>
            <shortName>3CLSP</shortName>
            <ecNumber>3.4.21.-</ecNumber>
        </recommendedName>
        <alternativeName>
            <fullName>M-PRO</fullName>
        </alternativeName>
        <alternativeName>
            <fullName>nsp3</fullName>
        </alternativeName>
        <alternativeName>
            <fullName>p27</fullName>
        </alternativeName>
    </component>
    <component>
        <recommendedName>
            <fullName>Non-structural protein 4</fullName>
            <shortName>nsp4</shortName>
        </recommendedName>
    </component>
    <component>
        <recommendedName>
            <fullName>Non-structural protein 5</fullName>
            <shortName>nsp5</shortName>
        </recommendedName>
    </component>
    <component>
        <recommendedName>
            <fullName>Non-structural protein 6</fullName>
            <shortName>nsp6</shortName>
        </recommendedName>
    </component>
    <component>
        <recommendedName>
            <fullName>Non-structural protein 7</fullName>
            <shortName>nsp7</shortName>
        </recommendedName>
    </component>
    <component>
        <recommendedName>
            <fullName>Non-structural protein 8</fullName>
            <shortName>nsp8</shortName>
        </recommendedName>
    </component>
    <component>
        <recommendedName>
            <fullName>Non-structural protein 9</fullName>
            <shortName>nsp9</shortName>
        </recommendedName>
    </component>
</protein>
<proteinExistence type="inferred from homology"/>
<reference key="1">
    <citation type="journal article" date="2006" name="Virus Res.">
        <title>The complete sequence of the bovine torovirus genome.</title>
        <authorList>
            <person name="Draker R."/>
            <person name="Roper R.L."/>
            <person name="Petric M."/>
            <person name="Tellier R."/>
        </authorList>
    </citation>
    <scope>NUCLEOTIDE SEQUENCE [GENOMIC RNA]</scope>
</reference>
<feature type="chain" id="PRO_0000338027" description="Replicase polyprotein 1a">
    <location>
        <begin position="1"/>
        <end position="4445"/>
    </location>
</feature>
<feature type="chain" id="PRO_0000338028" description="Papain-like proteinase" evidence="3">
    <location>
        <begin position="1"/>
        <end position="2753"/>
    </location>
</feature>
<feature type="chain" id="PRO_0000338029" description="Non-structural protein 2" evidence="3">
    <location>
        <begin position="2754"/>
        <end position="3131"/>
    </location>
</feature>
<feature type="chain" id="PRO_0000338031" description="3C-like serine proteinase" evidence="1">
    <location>
        <begin position="3132"/>
        <end position="3418"/>
    </location>
</feature>
<feature type="chain" id="PRO_0000338032" description="Non-structural protein 4" evidence="3">
    <location>
        <begin position="3419"/>
        <end position="3677"/>
    </location>
</feature>
<feature type="chain" id="PRO_0000338033" description="Non-structural protein 5" evidence="3">
    <location>
        <begin position="3678"/>
        <end position="3854"/>
    </location>
</feature>
<feature type="chain" id="PRO_0000338034" description="Non-structural protein 6" evidence="3">
    <location>
        <begin position="3855"/>
        <end position="4036"/>
    </location>
</feature>
<feature type="chain" id="PRO_0000338035" description="Non-structural protein 7" evidence="3">
    <location>
        <begin position="4037"/>
        <end position="4121"/>
    </location>
</feature>
<feature type="chain" id="PRO_0000338036" description="Non-structural protein 8" evidence="3">
    <location>
        <begin position="4122"/>
        <end position="4274"/>
    </location>
</feature>
<feature type="chain" id="PRO_0000338037" description="Non-structural protein 9" evidence="3">
    <location>
        <begin position="4275"/>
        <end position="4445"/>
    </location>
</feature>
<feature type="transmembrane region" description="Helical" evidence="3">
    <location>
        <begin position="2191"/>
        <end position="2211"/>
    </location>
</feature>
<feature type="transmembrane region" description="Helical" evidence="3">
    <location>
        <begin position="2219"/>
        <end position="2239"/>
    </location>
</feature>
<feature type="transmembrane region" description="Helical" evidence="3">
    <location>
        <begin position="2266"/>
        <end position="2286"/>
    </location>
</feature>
<feature type="transmembrane region" description="Helical" evidence="3">
    <location>
        <begin position="2411"/>
        <end position="2431"/>
    </location>
</feature>
<feature type="transmembrane region" description="Helical" evidence="3">
    <location>
        <begin position="2521"/>
        <end position="2541"/>
    </location>
</feature>
<feature type="transmembrane region" description="Helical" evidence="3">
    <location>
        <begin position="2546"/>
        <end position="2566"/>
    </location>
</feature>
<feature type="transmembrane region" description="Helical" evidence="3">
    <location>
        <begin position="2769"/>
        <end position="2789"/>
    </location>
</feature>
<feature type="transmembrane region" description="Helical" evidence="3">
    <location>
        <begin position="2937"/>
        <end position="2957"/>
    </location>
</feature>
<feature type="transmembrane region" description="Helical" evidence="3">
    <location>
        <begin position="2986"/>
        <end position="3006"/>
    </location>
</feature>
<feature type="transmembrane region" description="Helical" evidence="3">
    <location>
        <begin position="3022"/>
        <end position="3042"/>
    </location>
</feature>
<feature type="transmembrane region" description="Helical" evidence="3">
    <location>
        <begin position="3422"/>
        <end position="3442"/>
    </location>
</feature>
<feature type="transmembrane region" description="Helical" evidence="3">
    <location>
        <begin position="3456"/>
        <end position="3478"/>
    </location>
</feature>
<feature type="transmembrane region" description="Helical" evidence="3">
    <location>
        <begin position="3486"/>
        <end position="3506"/>
    </location>
</feature>
<feature type="transmembrane region" description="Helical" evidence="3">
    <location>
        <begin position="3514"/>
        <end position="3534"/>
    </location>
</feature>
<feature type="transmembrane region" description="Helical" evidence="3">
    <location>
        <begin position="3538"/>
        <end position="3558"/>
    </location>
</feature>
<feature type="transmembrane region" description="Helical" evidence="3">
    <location>
        <begin position="3573"/>
        <end position="3593"/>
    </location>
</feature>
<feature type="transmembrane region" description="Helical" evidence="3">
    <location>
        <begin position="3598"/>
        <end position="3613"/>
    </location>
</feature>
<feature type="domain" description="Macro" evidence="4">
    <location>
        <begin position="1633"/>
        <end position="1814"/>
    </location>
</feature>
<feature type="region of interest" description="HD1" evidence="1">
    <location>
        <begin position="2183"/>
        <end position="2565"/>
    </location>
</feature>
<feature type="region of interest" description="HD2" evidence="1">
    <location>
        <begin position="2769"/>
        <end position="3042"/>
    </location>
</feature>
<feature type="region of interest" description="HD3" evidence="1">
    <location>
        <begin position="3430"/>
        <end position="3613"/>
    </location>
</feature>
<feature type="active site" description="Charge relay system; for 3C-like serine proteinase activity" evidence="2">
    <location>
        <position position="3184"/>
    </location>
</feature>
<feature type="active site" description="Charge relay system; for 3C-like serine proteinase activity" evidence="2">
    <location>
        <position position="3222"/>
    </location>
</feature>
<feature type="active site" description="Charge relay system; for 3C-like serine proteinase activity" evidence="2">
    <location>
        <position position="3291"/>
    </location>
</feature>
<feature type="site" description="Cleavage; by 3C-like serine proteinase" evidence="2">
    <location>
        <begin position="2753"/>
        <end position="2754"/>
    </location>
</feature>
<feature type="site" description="Cleavage; by 3C-like serine proteinase" evidence="2">
    <location>
        <begin position="3131"/>
        <end position="3132"/>
    </location>
</feature>
<feature type="site" description="Cleavage; by 3C-like serine proteinase" evidence="2">
    <location>
        <begin position="3418"/>
        <end position="3419"/>
    </location>
</feature>
<feature type="site" description="Cleavage; by 3C-like serine proteinase" evidence="2">
    <location>
        <begin position="3677"/>
        <end position="3678"/>
    </location>
</feature>
<feature type="site" description="Cleavage; by 3C-like serine proteinase" evidence="2">
    <location>
        <begin position="3854"/>
        <end position="3855"/>
    </location>
</feature>
<feature type="site" description="Cleavage; by 3C-like serine proteinase" evidence="2">
    <location>
        <begin position="4036"/>
        <end position="4037"/>
    </location>
</feature>
<feature type="site" description="Cleavage; by 3C-like serine proteinase" evidence="2">
    <location>
        <begin position="4121"/>
        <end position="4122"/>
    </location>
</feature>
<feature type="site" description="Cleavage; by 3C-like serine proteinase" evidence="2">
    <location>
        <begin position="4274"/>
        <end position="4275"/>
    </location>
</feature>
<organism>
    <name type="scientific">Breda virus 1</name>
    <name type="common">BRV-1</name>
    <dbReference type="NCBI Taxonomy" id="360393"/>
    <lineage>
        <taxon>Viruses</taxon>
        <taxon>Riboviria</taxon>
        <taxon>Orthornavirae</taxon>
        <taxon>Pisuviricota</taxon>
        <taxon>Pisoniviricetes</taxon>
        <taxon>Nidovirales</taxon>
        <taxon>Tornidovirineae</taxon>
        <taxon>Tobaniviridae</taxon>
        <taxon>Torovirinae</taxon>
        <taxon>Torovirus</taxon>
        <taxon>Renitovirus</taxon>
        <taxon>Bovine torovirus</taxon>
    </lineage>
</organism>
<dbReference type="EC" id="3.4.22.-"/>
<dbReference type="EC" id="3.4.21.-"/>
<dbReference type="EMBL" id="AY427798">
    <property type="protein sequence ID" value="AAS17958.1"/>
    <property type="molecule type" value="Genomic_RNA"/>
</dbReference>
<dbReference type="MEROPS" id="S65.001"/>
<dbReference type="KEGG" id="vg:3707765"/>
<dbReference type="Proteomes" id="UP000000355">
    <property type="component" value="Segment"/>
</dbReference>
<dbReference type="GO" id="GO:0033644">
    <property type="term" value="C:host cell membrane"/>
    <property type="evidence" value="ECO:0007669"/>
    <property type="project" value="UniProtKB-SubCell"/>
</dbReference>
<dbReference type="GO" id="GO:0016020">
    <property type="term" value="C:membrane"/>
    <property type="evidence" value="ECO:0007669"/>
    <property type="project" value="UniProtKB-KW"/>
</dbReference>
<dbReference type="GO" id="GO:0008234">
    <property type="term" value="F:cysteine-type peptidase activity"/>
    <property type="evidence" value="ECO:0007669"/>
    <property type="project" value="UniProtKB-KW"/>
</dbReference>
<dbReference type="GO" id="GO:0046872">
    <property type="term" value="F:metal ion binding"/>
    <property type="evidence" value="ECO:0007669"/>
    <property type="project" value="UniProtKB-KW"/>
</dbReference>
<dbReference type="GO" id="GO:0008236">
    <property type="term" value="F:serine-type peptidase activity"/>
    <property type="evidence" value="ECO:0007669"/>
    <property type="project" value="UniProtKB-KW"/>
</dbReference>
<dbReference type="GO" id="GO:0006508">
    <property type="term" value="P:proteolysis"/>
    <property type="evidence" value="ECO:0007669"/>
    <property type="project" value="UniProtKB-KW"/>
</dbReference>
<dbReference type="GO" id="GO:0075523">
    <property type="term" value="P:viral translational frameshifting"/>
    <property type="evidence" value="ECO:0007669"/>
    <property type="project" value="UniProtKB-KW"/>
</dbReference>
<dbReference type="CDD" id="cd21557">
    <property type="entry name" value="Macro_X_Nsp3-like"/>
    <property type="match status" value="1"/>
</dbReference>
<dbReference type="Gene3D" id="3.90.1140.10">
    <property type="entry name" value="Cyclic phosphodiesterase"/>
    <property type="match status" value="1"/>
</dbReference>
<dbReference type="Gene3D" id="3.40.220.10">
    <property type="entry name" value="Leucine Aminopeptidase, subunit E, domain 1"/>
    <property type="match status" value="1"/>
</dbReference>
<dbReference type="InterPro" id="IPR009097">
    <property type="entry name" value="Cyclic_Pdiesterase"/>
</dbReference>
<dbReference type="InterPro" id="IPR002589">
    <property type="entry name" value="Macro_dom"/>
</dbReference>
<dbReference type="InterPro" id="IPR043472">
    <property type="entry name" value="Macro_dom-like"/>
</dbReference>
<dbReference type="InterPro" id="IPR044371">
    <property type="entry name" value="Macro_X_NSP3-like"/>
</dbReference>
<dbReference type="InterPro" id="IPR039573">
    <property type="entry name" value="NS2A-like"/>
</dbReference>
<dbReference type="InterPro" id="IPR038765">
    <property type="entry name" value="Papain-like_cys_pep_sf"/>
</dbReference>
<dbReference type="InterPro" id="IPR009003">
    <property type="entry name" value="Peptidase_S1_PA"/>
</dbReference>
<dbReference type="Pfam" id="PF05213">
    <property type="entry name" value="Corona_NS2A"/>
    <property type="match status" value="1"/>
</dbReference>
<dbReference type="Pfam" id="PF01661">
    <property type="entry name" value="Macro"/>
    <property type="match status" value="1"/>
</dbReference>
<dbReference type="SMART" id="SM00506">
    <property type="entry name" value="A1pp"/>
    <property type="match status" value="1"/>
</dbReference>
<dbReference type="SUPFAM" id="SSF54001">
    <property type="entry name" value="Cysteine proteinases"/>
    <property type="match status" value="1"/>
</dbReference>
<dbReference type="SUPFAM" id="SSF55144">
    <property type="entry name" value="LigT-like"/>
    <property type="match status" value="1"/>
</dbReference>
<dbReference type="SUPFAM" id="SSF52949">
    <property type="entry name" value="Macro domain-like"/>
    <property type="match status" value="1"/>
</dbReference>
<dbReference type="SUPFAM" id="SSF50494">
    <property type="entry name" value="Trypsin-like serine proteases"/>
    <property type="match status" value="1"/>
</dbReference>
<dbReference type="PROSITE" id="PS51154">
    <property type="entry name" value="MACRO"/>
    <property type="match status" value="1"/>
</dbReference>
<gene>
    <name type="ORF">1a</name>
</gene>
<sequence length="4445" mass="505933">MSKTSRELTNETELHLCSSTLDLISKSQLLAQCLGTPQNLVSLSKMVPSILESPTLEPRYTSTHSSSLQSLQLLALNTSSTLYKWTTGSISKLRGHLERELCRGLVPLNDFIPKGNYVELSLMIPSVLTGQGTSTTTTLQEMCSDMVQSCIKSMETDLLKGVLALKDQTSCQEYFLSANYQSLIPPQPLVNAMRMSSVVDLSPLILENTRLLLKLSPFHGGTSVSYTSMIREFVDCSRRDEKCLKRRLTKKQKRQEEGSFDANKVITLGGKMYRYRVVILKCSDEVDDLIGFDGKVGEFDYNFENVPHCWRDLVKRRCLIRAKATWNLAGGVDENLDHVYIDESQXDFRCADGSSDSPSACVEDPHLEERIFSRVWLKQTSRFFGTKIQQVSELFKSIGLPELETTYCGVNPVKVGNKWLSFRDQGRSRVFFVYTDSNVYLATTRQKVCCDYILTKFKSVKWIGNKPDQCRVVKVLAWLISVNKVKNCTRVITPMLTVQGKISHRRVDYLDISVLDSYVSDTAGLNCVQKVKKFLSMYYNCGADLGLLDNFLTPIECGTKQLVFERCNCPNHQFYVAQFDNHVVLGLGRPTGVVYPEEIPSCANIYAVGFATQKRVVEVHYYSEMDRHQLPQDYYYFAYDQEFQHVGGDDYVNHHLDDVEDQPFPPVLFDDVYDSGDSLDDGGSDLDCFDVGYDFFWPEAPIPVPSPYGYYQGQRLRDLCVAGGDFGCDCPRCDGTFIYHPFRPRHYHSFDEVGPFIQMCEFTLTYSGQNYNLFYGLEPKVCLQDLVEASDKLLQLLVRGQLENISLPNDILACLSSLKLGANIHPFLWPAPFFNANGEWVDIFGGGDFTVFGEDFCLKAKSMVESVYFLVENFFSVDCPIGNLYCNLHLDGDVKKMLWSTIHMKYIYLALIHSEKVFNIILNSRQLSHQELVKLVIIGTFDVSIVAPCACSGDCNHGKVYNWTNLLSSVYRFVTLDQLVGLSYCEKRSLVLRKVQQYLEVEEGYQRPVQLLMAPFYGFNDNAEPDEQPLTGVFHQQVMQMFDTCVMLDVICGLKRPRASVYNLFGVLADYFRRPFTFRYYQVAEFSGSESTQVFTDVTSALTSKDPCSNRPYIYHDYAVCRVVEPRTAAVTTRGAIYPPEVIEMIRSYLPIEFDVGVMNYVDGNCDFKYCNLEFCLSGRGLVKLDTGELLDYKTNLFVVRYKTLPLLYVTSNPIYLSDFSLDNAVCLTGDFKLSFDVEPGSTLFGLYFTNGRCYRDVWETLPRFGLGTLSPPKCHSKCEPFENLAEVFFFKRRVQLVPLVNNYTPVFRHRPDIPKVLTVELMPYYSSIGYQGFVAPKCVLPGCVATQYCKLRHQLDRCVQVTKLAVAYAFYFKPLNIGSLYHLDPMRGTSYGKPAVVQFEPVGLIKEVNILVYQFGKHVAIHYFPECPTYVAYGHYPSHSVGVWLGYLPSVEECVIAQRNYRVYVPTCFRLSRTGCYHIQQDEDFERTHITVSYHYARDFDTKSLTPMFQMFSKIFGKSKQDLICALNSLSEESQSVLTLFCEEFDSAYTLQTISDEVSFETSTSPELVACVLAYAIGYELCLTVKTDGECESLDVGSSLEQVYVDYDVSKNVWDLSTHLQDDSSDDLELPFNQYYEFKVGRASVVLVQDDFKSVYDFLKSEQGVDYVVNPANNQLKHGGGIAKVISCMCGPKLTSWSNNYIKQYKKLGVTCAIRSPGFQLGKGVQIIHVVGPKSADSDVVNKLEASWRSVFQNVKPDTTVLTSMLSTGIFGCSVTDSATTLLSNLVDLDKDVVVFVVTNVSDQYIEALGVVESFQSAHGLPNFGNTCWFNALYQLLKSFAVKEQIVQDLVNCFDDFYECPTRQCVEWVCDQLGVVFGEQYDAVEMLVKIFDVFKCNVRVGYDCLARLQQVALGSCREVPADAVLMFFGQDKSGHWVAARKVCGVWYTFDDKVVVKKDPDWSKVVLVLRERGLFKATDFETPRPRRRRVAYRVPRDTISQDAIMFLEERQFSSGTMLAHSCVESVESFHVEGVQPSPLQSVDGLDDVADLSCDNHVCDNSDLQEPQVVVSQPSEVLTTSMSIECPVLENSECSVETDLNPVCEENEQVGESGIKEQDGVTTSDSQQVFSKSLDPIIKQHEVESVEPQDLPVFSQQPQVMLSMTWRDVLFQQYLGFKSDLLSLTHVNKFKIVVYLMVLWFVLLYCFSDFSLLSRFCLYVFLLWLSHVVLVVKKLDLGLVNSGGESYVLRILSSVKVPNCIAFNCDGVHWLILKLLFYSFHFYDFFVKTLVVVFQMPQLRCFTWPLLKLGFADTFLSHHILAFPTKQVSQSCLPVFGDERKYIYVPYWCKESFRTLVARAKQLTATGRTKTLDNWHYQCCSKTVKPSSCFNVRDFVFDDACNNHKHYGFFSALWFYVVFYSGFVSFWLPLMFCYCALFMCTFKNLPVNITRPIRWTVLQQVVDDLLSIITKPLFGRPACPPLSAYLTATTADEAVRASRSLLGRFCTPVGFQQPIMNVENGVAVSSLGFINPLMWPLFIVVLLDNRFVWFFNVLSYIMLPVFVIILFYFYLRKICGCVNVKGVVKNCTRHFQNFSKPLVAAGVHGNRTNFTYQPMQENWCDRHSWYCPKEEHYMTPEMAMFIKNYYNLATSPMADTIWCDYVKSVPNMTWANFKFSLFKSNETVMCGPSSHADSMLLSWYAFLHGIRFAVNPSVIDIPSQTQPIYVSSDSDDSLDKGCDVSLRPTKNKGKFKKQSVAYFSAGPVDLWYYVMLIIALGAIFVFMYSCFMVGQYVVMPRDKFFGVNPTGYSYVNAQPYLHASPPVLRNSDGMVLATPLKVPSISYSVYRLLSGHLYFTKLIVAENECTPPFGAXRLSHEFTCNDFTYILPAHLRIFGRYIMLIHPDQLHMLPFEVEHSTHTRLCYVTGTNIVECLPTFEIISPYVFVVLVAIFTIVFLFLLRMYIVMYSYFKVFTYVVFKLLFVNTVMVLFVVCLPPLVPGVVFVLALWLCDSVVFLLYLAVLSLFILPWFYVMLFVLIVGGFVFWWMMKSSDVVHLTPDGLTFNGTFEQVSKCVFPLNPLIVNRLLLDCRMSHSDLVEKSKLKTTEGKLATEMMKVFMTGETAYYQPSNFSFQSVFSKVVSPFTLHARPPMPMFRLYVYFNGQCVGTTCTGTGFAIDDSTIVTAKHLFECDDLKPTHLSVELSCRSYWCTWKEPNVLSWKFEGENAYISVENLRDFYGIDFKYLPFQQIECEFYKRMEAVTIYSIKYGSEFATQAWQTVNGHFVCCNTEGGDSGAPLVWRDSVIGVHQGLCDSFKTTLASDSKGVMMTEVKGYHVDPPVYYKPIIMSAAYNKFVADSDVSVGECTNYHNFVNEDFFSMHDELEKVSFGDKMFRYCQSLPRYLEPLHYFHVPSFWQPFKKQSVSSNVSWVVENLHFIFSVYFLVCDFVAYWWLDDPFSVVLPLFFVVQLLSTVVLKNVLFWNTSYLVTLAVTFYVHSEVAESMYLLGLFSDQIVNRVGLILVVSVMCLFVVVRVVVNVKRAIFVVVVSVLLIVVNVVLGVVQFNSLVAVCMFDIYAVFAALLTPQPVVAIMMLILFDTKCLMSFAFVVIVLSFRVFKNYKFVRVLHNLCNFDFVLTQLSLFRYRHHNQGNNPSHYEALWLFLKELYYGVQDVKYEVFSPQAGTYNVRFLTDMTEQDQLEAVEQVQRRLQRFSIVQDKNSQRLVLYSKNVDFLRSQIQHQRVLGANPFIITTLTPKDIAIDNVEVHNPSQFKPEDLQAHMWFYSKSPIFVGQVPIPTNVQTAAVLDTTYNCQDLTADEKNNVAANLQIQNAALTLSLFEECNRFLESELGDVPTLMWQSEDVVDVKQLEVQIEKLRVVLDGMQLGTSEYKATRKQINILQSQLDKALAFERKLAKFLEKVDQQQAITNETAKQLSAFKNLVKQVYESYMSSLKVRVVESNDASCLLTSTDLPRKLVLMRPITGLDNIKIVEKANGCEITAFGDTFTTGLGSNLAGLAYSSTQPLSAYPFIFNLEGIFKQQANIGYKTVECNMSSDNGSVLYKGKIVAVPSEDNPDFVVCGKGYKLDCGINVLMIPSIVRYITLNLTDHLQRQSLKPRRRLQYKQQGVRLGGVNLGEHQAFSNELISSVGYTTWVSSTVCTDKSHKHPWFVQIPSSEKDPEWFMHNTQVKNNQWVVDAKPTHWLVDADTNEQLFALALTDEEYLKAESILAKWSPITQDVECWFKDLRGYYTVSGLQPLWPVCPKKICSLKIVPIFQSQSVAYADEPTHFLSLPVVNKNFLEAFYELQEGFPGEKQVAPHISLTMLKLTEEDVAKVEDILDEMVLPNTYATITNPHMMGQYYVFEVEGLQALHDEVVSVLRQHGIACDQTRMWKPHLTIGEIKDGSVFNKFKDFGITCKLEDCDFVKLGAPKANARYEFIATLPVGDLNC</sequence>
<comment type="function">
    <molecule>3C-like serine proteinase</molecule>
    <text evidence="2">The 3C-like serine proteinase is responsible for the majority of cleavages.</text>
</comment>
<comment type="subcellular location">
    <molecule>Papain-like proteinase</molecule>
    <subcellularLocation>
        <location evidence="5">Host membrane</location>
        <topology evidence="5">Multi-pass membrane protein</topology>
    </subcellularLocation>
</comment>
<comment type="subcellular location">
    <molecule>Non-structural protein 2</molecule>
    <subcellularLocation>
        <location evidence="5">Host membrane</location>
        <topology evidence="5">Multi-pass membrane protein</topology>
    </subcellularLocation>
</comment>
<comment type="subcellular location">
    <molecule>Non-structural protein 4</molecule>
    <subcellularLocation>
        <location evidence="5">Host membrane</location>
        <topology evidence="5">Multi-pass membrane protein</topology>
    </subcellularLocation>
</comment>
<comment type="alternative products">
    <event type="ribosomal frameshifting"/>
    <isoform>
        <id>P0C6F4-1</id>
        <name>Replicase polyprotein 1a</name>
        <name>pp1a</name>
        <name>ORF1a polyprotein</name>
        <sequence type="displayed"/>
    </isoform>
    <isoform>
        <id>P0C6V8-1</id>
        <name>Replicase polyprotein 1ab</name>
        <name>pp1ab</name>
        <sequence type="external"/>
    </isoform>
</comment>
<comment type="domain">
    <text evidence="1">The hydrophobic domains (HD) could mediate the membrane association of the replication complex and thereby alter the architecture of the host cell membrane.</text>
</comment>
<comment type="PTM">
    <molecule>Isoform Replicase polyprotein 1a</molecule>
    <text evidence="2">Specific enzymatic cleavages in vivo by its own protease yield mature proteins. 3CL-PRO is autocatalytically processed.</text>
</comment>
<comment type="miscellaneous">
    <molecule>Isoform Replicase polyprotein 1a</molecule>
    <text>Produced by conventional translation.</text>
</comment>
<evidence type="ECO:0000250" key="1"/>
<evidence type="ECO:0000250" key="2">
    <source>
        <dbReference type="UniProtKB" id="P0C6V7"/>
    </source>
</evidence>
<evidence type="ECO:0000255" key="3"/>
<evidence type="ECO:0000255" key="4">
    <source>
        <dbReference type="PROSITE-ProRule" id="PRU00490"/>
    </source>
</evidence>
<evidence type="ECO:0000305" key="5"/>
<keyword id="KW-1043">Host membrane</keyword>
<keyword id="KW-0378">Hydrolase</keyword>
<keyword id="KW-0472">Membrane</keyword>
<keyword id="KW-0479">Metal-binding</keyword>
<keyword id="KW-0645">Protease</keyword>
<keyword id="KW-1185">Reference proteome</keyword>
<keyword id="KW-0677">Repeat</keyword>
<keyword id="KW-0688">Ribosomal frameshifting</keyword>
<keyword id="KW-0720">Serine protease</keyword>
<keyword id="KW-0788">Thiol protease</keyword>
<keyword id="KW-0812">Transmembrane</keyword>
<keyword id="KW-1133">Transmembrane helix</keyword>
<name>R1A_BRV1</name>